<keyword id="KW-0004">4Fe-4S</keyword>
<keyword id="KW-0028">Amino-acid biosynthesis</keyword>
<keyword id="KW-0903">Direct protein sequencing</keyword>
<keyword id="KW-0314">Glutamate biosynthesis</keyword>
<keyword id="KW-0408">Iron</keyword>
<keyword id="KW-0411">Iron-sulfur</keyword>
<keyword id="KW-0479">Metal-binding</keyword>
<keyword id="KW-0521">NADP</keyword>
<keyword id="KW-0560">Oxidoreductase</keyword>
<keyword id="KW-1185">Reference proteome</keyword>
<proteinExistence type="evidence at protein level"/>
<organism>
    <name type="scientific">Escherichia coli (strain K12)</name>
    <dbReference type="NCBI Taxonomy" id="83333"/>
    <lineage>
        <taxon>Bacteria</taxon>
        <taxon>Pseudomonadati</taxon>
        <taxon>Pseudomonadota</taxon>
        <taxon>Gammaproteobacteria</taxon>
        <taxon>Enterobacterales</taxon>
        <taxon>Enterobacteriaceae</taxon>
        <taxon>Escherichia</taxon>
    </lineage>
</organism>
<accession>P09832</accession>
<accession>Q2M8Z9</accession>
<name>GLTD_ECOLI</name>
<evidence type="ECO:0000255" key="1">
    <source>
        <dbReference type="PROSITE-ProRule" id="PRU00711"/>
    </source>
</evidence>
<evidence type="ECO:0000269" key="2">
    <source>
    </source>
</evidence>
<evidence type="ECO:0000269" key="3">
    <source>
    </source>
</evidence>
<evidence type="ECO:0000269" key="4">
    <source>
    </source>
</evidence>
<evidence type="ECO:0000305" key="5"/>
<feature type="initiator methionine" description="Removed" evidence="3 4">
    <location>
        <position position="1"/>
    </location>
</feature>
<feature type="chain" id="PRO_0000170800" description="Glutamate synthase [NADPH] small chain">
    <location>
        <begin position="2"/>
        <end position="472"/>
    </location>
</feature>
<feature type="domain" description="4Fe-4S ferredoxin-type" evidence="1">
    <location>
        <begin position="38"/>
        <end position="69"/>
    </location>
</feature>
<feature type="binding site" evidence="1">
    <location>
        <position position="47"/>
    </location>
    <ligand>
        <name>[4Fe-4S] cluster</name>
        <dbReference type="ChEBI" id="CHEBI:49883"/>
    </ligand>
</feature>
<feature type="binding site" evidence="1">
    <location>
        <position position="50"/>
    </location>
    <ligand>
        <name>[4Fe-4S] cluster</name>
        <dbReference type="ChEBI" id="CHEBI:49883"/>
    </ligand>
</feature>
<feature type="binding site" evidence="1">
    <location>
        <position position="55"/>
    </location>
    <ligand>
        <name>[4Fe-4S] cluster</name>
        <dbReference type="ChEBI" id="CHEBI:49883"/>
    </ligand>
</feature>
<feature type="binding site" evidence="1">
    <location>
        <position position="59"/>
    </location>
    <ligand>
        <name>[4Fe-4S] cluster</name>
        <dbReference type="ChEBI" id="CHEBI:49883"/>
    </ligand>
</feature>
<feature type="sequence conflict" description="In Ref. 1." evidence="5" ref="1">
    <original>GQAKAQADRCLSCG</original>
    <variation>ARPKRRLTAACRAA</variation>
    <location>
        <begin position="38"/>
        <end position="51"/>
    </location>
</feature>
<feature type="sequence conflict" description="In Ref. 1; AAA23905." evidence="5" ref="1">
    <original>E</original>
    <variation>K</variation>
    <location>
        <position position="123"/>
    </location>
</feature>
<feature type="sequence conflict" description="In Ref. 1; AAA23905." evidence="5" ref="1">
    <original>V</original>
    <variation>C</variation>
    <location>
        <position position="174"/>
    </location>
</feature>
<feature type="sequence conflict" description="In Ref. 1." evidence="5" ref="1">
    <original>VYAALPFLIANTKQ</original>
    <variation>CTQRCRSSSPTPNS</variation>
    <location>
        <begin position="257"/>
        <end position="270"/>
    </location>
</feature>
<feature type="sequence conflict" description="In Ref. 1; AAA23905." evidence="5" ref="1">
    <original>KH</original>
    <variation>ND</variation>
    <location>
        <begin position="312"/>
        <end position="313"/>
    </location>
</feature>
<feature type="sequence conflict" description="In Ref. 1; AAA23905." evidence="5" ref="1">
    <original>GRRRAEIVAGSEHIVPADAVIMAFG</original>
    <variation>ASPRGDRCRFRTYRTGRCGDHGVW</variation>
    <location>
        <begin position="376"/>
        <end position="400"/>
    </location>
</feature>
<sequence>MSQNVYQFIDLQRVDPPKKPLKIRKIEFVEIYEPFSEGQAKAQADRCLSCGNPYCEWKCPVHNYIPNWLKLANEGRIFEAAELSHQTNTLPEVCGRVCPQDRLCEGSCTLNDEFGAVTIGNIERYINDKAFEMGWRPDMSGVKQTGKKVAIIGAGPAGLACADVLTRNGVKAVVFDRHPEIGGLLTFGIPAFKLEKEVMTRRREIFTGMGIEFKLNTEVGRDVQLDDLLSDYDAVFLGVGTYQSMRGGLENEDADGVYAALPFLIANTKQLMGFGETRDEPFVSMEGKRVVVLGGGDTAMDCVRTSVRQGAKHVTCAYRRDEENMPGSRREVKNAREEGVEFKFNVQPLGIEVNGNGKVSGVKMVRTEMGEPDAKGRRRAEIVAGSEHIVPADAVIMAFGFRPHNMEWLAKHSVELDSQGRIIAPEGSDNAFQTSNPKIFAGGDIVRGSDLVVTAIAEGRKAADGIMNWLEV</sequence>
<comment type="function">
    <text evidence="2">Catalyzes the conversion of L-glutamine and 2-oxoglutarate into two molecules of L-glutamate.</text>
</comment>
<comment type="catalytic activity">
    <reaction evidence="2">
        <text>2 L-glutamate + NADP(+) = L-glutamine + 2-oxoglutarate + NADPH + H(+)</text>
        <dbReference type="Rhea" id="RHEA:15501"/>
        <dbReference type="ChEBI" id="CHEBI:15378"/>
        <dbReference type="ChEBI" id="CHEBI:16810"/>
        <dbReference type="ChEBI" id="CHEBI:29985"/>
        <dbReference type="ChEBI" id="CHEBI:57783"/>
        <dbReference type="ChEBI" id="CHEBI:58349"/>
        <dbReference type="ChEBI" id="CHEBI:58359"/>
        <dbReference type="EC" id="1.4.1.13"/>
    </reaction>
</comment>
<comment type="cofactor">
    <cofactor evidence="1">
        <name>[4Fe-4S] cluster</name>
        <dbReference type="ChEBI" id="CHEBI:49883"/>
    </cofactor>
    <text evidence="1">Binds 1 [4Fe-4S] cluster.</text>
</comment>
<comment type="biophysicochemical properties">
    <kinetics>
        <KM evidence="2">7.3 uM for 2-oxoglutarate</KM>
        <KM evidence="2">250 uM for L-glutamine</KM>
    </kinetics>
    <phDependence>
        <text evidence="2">Optimum pH is 7.6.</text>
    </phDependence>
</comment>
<comment type="pathway">
    <text>Amino-acid biosynthesis; L-glutamate biosynthesis via GLT pathway; L-glutamate from 2-oxoglutarate and L-glutamine (NADP(+) route): step 1/1.</text>
</comment>
<comment type="pathway">
    <text>Energy metabolism; nitrogen metabolism.</text>
</comment>
<comment type="subunit">
    <text evidence="2">Aggregate of 4 catalytic active heterodimers, consisting of a large and a small subunit.</text>
</comment>
<comment type="interaction">
    <interactant intactId="EBI-544293">
        <id>P09832</id>
    </interactant>
    <interactant intactId="EBI-551179">
        <id>P09831</id>
        <label>gltB</label>
    </interactant>
    <organismsDiffer>false</organismsDiffer>
    <experiments>3</experiments>
</comment>
<comment type="miscellaneous">
    <text>Glutamine binds to the large subunit and transfers the amido group to 2-oxoglutarate that apparently binds to the small subunit.</text>
</comment>
<dbReference type="EC" id="1.4.1.13" evidence="2"/>
<dbReference type="EMBL" id="M18747">
    <property type="protein sequence ID" value="AAA23905.1"/>
    <property type="molecule type" value="Genomic_DNA"/>
</dbReference>
<dbReference type="EMBL" id="U18997">
    <property type="protein sequence ID" value="AAA58015.1"/>
    <property type="molecule type" value="Genomic_DNA"/>
</dbReference>
<dbReference type="EMBL" id="U00096">
    <property type="protein sequence ID" value="AAC76245.1"/>
    <property type="molecule type" value="Genomic_DNA"/>
</dbReference>
<dbReference type="EMBL" id="AP009048">
    <property type="protein sequence ID" value="BAE77257.1"/>
    <property type="molecule type" value="Genomic_DNA"/>
</dbReference>
<dbReference type="PIR" id="G65112">
    <property type="entry name" value="G65112"/>
</dbReference>
<dbReference type="RefSeq" id="NP_417680.1">
    <property type="nucleotide sequence ID" value="NC_000913.3"/>
</dbReference>
<dbReference type="RefSeq" id="WP_000081674.1">
    <property type="nucleotide sequence ID" value="NZ_STEB01000012.1"/>
</dbReference>
<dbReference type="SMR" id="P09832"/>
<dbReference type="BioGRID" id="4262427">
    <property type="interactions" value="202"/>
</dbReference>
<dbReference type="BioGRID" id="852036">
    <property type="interactions" value="1"/>
</dbReference>
<dbReference type="ComplexPortal" id="CPX-5041">
    <property type="entry name" value="Glutamate synthase [NADPH] complex"/>
</dbReference>
<dbReference type="DIP" id="DIP-9803N"/>
<dbReference type="FunCoup" id="P09832">
    <property type="interactions" value="519"/>
</dbReference>
<dbReference type="IntAct" id="P09832">
    <property type="interactions" value="6"/>
</dbReference>
<dbReference type="STRING" id="511145.b3213"/>
<dbReference type="jPOST" id="P09832"/>
<dbReference type="PaxDb" id="511145-b3213"/>
<dbReference type="EnsemblBacteria" id="AAC76245">
    <property type="protein sequence ID" value="AAC76245"/>
    <property type="gene ID" value="b3213"/>
</dbReference>
<dbReference type="GeneID" id="947723"/>
<dbReference type="KEGG" id="ecj:JW3180"/>
<dbReference type="KEGG" id="eco:b3213"/>
<dbReference type="KEGG" id="ecoc:C3026_17480"/>
<dbReference type="PATRIC" id="fig|511145.12.peg.3308"/>
<dbReference type="EchoBASE" id="EB0399"/>
<dbReference type="eggNOG" id="COG0493">
    <property type="taxonomic scope" value="Bacteria"/>
</dbReference>
<dbReference type="HOGENOM" id="CLU_000422_3_3_6"/>
<dbReference type="InParanoid" id="P09832"/>
<dbReference type="OMA" id="CVGTANR"/>
<dbReference type="OrthoDB" id="9803192at2"/>
<dbReference type="PhylomeDB" id="P09832"/>
<dbReference type="BioCyc" id="EcoCyc:GLUSYNSMALL-MONOMER"/>
<dbReference type="BioCyc" id="MetaCyc:GLUSYNSMALL-MONOMER"/>
<dbReference type="BRENDA" id="1.4.1.13">
    <property type="organism ID" value="2026"/>
</dbReference>
<dbReference type="SABIO-RK" id="P09832"/>
<dbReference type="UniPathway" id="UPA00045"/>
<dbReference type="UniPathway" id="UPA00634">
    <property type="reaction ID" value="UER00689"/>
</dbReference>
<dbReference type="PRO" id="PR:P09832"/>
<dbReference type="Proteomes" id="UP000000625">
    <property type="component" value="Chromosome"/>
</dbReference>
<dbReference type="GO" id="GO:0005829">
    <property type="term" value="C:cytosol"/>
    <property type="evidence" value="ECO:0000314"/>
    <property type="project" value="EcoCyc"/>
</dbReference>
<dbReference type="GO" id="GO:0009342">
    <property type="term" value="C:glutamate synthase complex (NADPH)"/>
    <property type="evidence" value="ECO:0000353"/>
    <property type="project" value="ComplexPortal"/>
</dbReference>
<dbReference type="GO" id="GO:0051539">
    <property type="term" value="F:4 iron, 4 sulfur cluster binding"/>
    <property type="evidence" value="ECO:0007669"/>
    <property type="project" value="UniProtKB-KW"/>
</dbReference>
<dbReference type="GO" id="GO:0004355">
    <property type="term" value="F:glutamate synthase (NADPH) activity"/>
    <property type="evidence" value="ECO:0000314"/>
    <property type="project" value="EcoCyc"/>
</dbReference>
<dbReference type="GO" id="GO:0046872">
    <property type="term" value="F:metal ion binding"/>
    <property type="evidence" value="ECO:0007669"/>
    <property type="project" value="UniProtKB-KW"/>
</dbReference>
<dbReference type="GO" id="GO:0019676">
    <property type="term" value="P:ammonia assimilation cycle"/>
    <property type="evidence" value="ECO:0000314"/>
    <property type="project" value="ComplexPortal"/>
</dbReference>
<dbReference type="GO" id="GO:0006537">
    <property type="term" value="P:glutamate biosynthetic process"/>
    <property type="evidence" value="ECO:0000314"/>
    <property type="project" value="EcoCyc"/>
</dbReference>
<dbReference type="GO" id="GO:0097054">
    <property type="term" value="P:L-glutamate biosynthetic process"/>
    <property type="evidence" value="ECO:0000314"/>
    <property type="project" value="ComplexPortal"/>
</dbReference>
<dbReference type="FunFam" id="3.50.50.60:FF:000068">
    <property type="entry name" value="Glutamate synthase small subunit"/>
    <property type="match status" value="1"/>
</dbReference>
<dbReference type="FunFam" id="3.50.50.60:FF:000077">
    <property type="entry name" value="Glutamate synthase small subunit"/>
    <property type="match status" value="1"/>
</dbReference>
<dbReference type="FunFam" id="1.10.1060.10:FF:000004">
    <property type="entry name" value="Glutamate synthase, small subunit"/>
    <property type="match status" value="1"/>
</dbReference>
<dbReference type="Gene3D" id="1.10.1060.10">
    <property type="entry name" value="Alpha-helical ferredoxin"/>
    <property type="match status" value="1"/>
</dbReference>
<dbReference type="Gene3D" id="3.50.50.60">
    <property type="entry name" value="FAD/NAD(P)-binding domain"/>
    <property type="match status" value="2"/>
</dbReference>
<dbReference type="InterPro" id="IPR017896">
    <property type="entry name" value="4Fe4S_Fe-S-bd"/>
</dbReference>
<dbReference type="InterPro" id="IPR028261">
    <property type="entry name" value="DPD_II"/>
</dbReference>
<dbReference type="InterPro" id="IPR036188">
    <property type="entry name" value="FAD/NAD-bd_sf"/>
</dbReference>
<dbReference type="InterPro" id="IPR023753">
    <property type="entry name" value="FAD/NAD-binding_dom"/>
</dbReference>
<dbReference type="InterPro" id="IPR006006">
    <property type="entry name" value="GltD-like"/>
</dbReference>
<dbReference type="InterPro" id="IPR009051">
    <property type="entry name" value="Helical_ferredxn"/>
</dbReference>
<dbReference type="NCBIfam" id="TIGR01318">
    <property type="entry name" value="gltD_gamma_fam"/>
    <property type="match status" value="1"/>
</dbReference>
<dbReference type="PANTHER" id="PTHR42783">
    <property type="entry name" value="GLUTAMATE SYNTHASE [NADPH] SMALL CHAIN"/>
    <property type="match status" value="1"/>
</dbReference>
<dbReference type="PANTHER" id="PTHR42783:SF3">
    <property type="entry name" value="GLUTAMATE SYNTHASE [NADPH] SMALL CHAIN-RELATED"/>
    <property type="match status" value="1"/>
</dbReference>
<dbReference type="Pfam" id="PF14691">
    <property type="entry name" value="Fer4_20"/>
    <property type="match status" value="1"/>
</dbReference>
<dbReference type="Pfam" id="PF07992">
    <property type="entry name" value="Pyr_redox_2"/>
    <property type="match status" value="1"/>
</dbReference>
<dbReference type="PRINTS" id="PR00419">
    <property type="entry name" value="ADXRDTASE"/>
</dbReference>
<dbReference type="SUPFAM" id="SSF46548">
    <property type="entry name" value="alpha-helical ferredoxin"/>
    <property type="match status" value="1"/>
</dbReference>
<dbReference type="SUPFAM" id="SSF51971">
    <property type="entry name" value="Nucleotide-binding domain"/>
    <property type="match status" value="1"/>
</dbReference>
<dbReference type="PROSITE" id="PS51379">
    <property type="entry name" value="4FE4S_FER_2"/>
    <property type="match status" value="1"/>
</dbReference>
<reference key="1">
    <citation type="journal article" date="1987" name="Gene">
        <title>Determination of the nucleotide sequence for the glutamate synthase structural genes of Escherichia coli K-12.</title>
        <authorList>
            <person name="Oliver G."/>
            <person name="Gosset G."/>
            <person name="Sanchez-Pescador R."/>
            <person name="Lozoya E."/>
            <person name="Ku L.M."/>
            <person name="Flores N."/>
            <person name="Becerril B."/>
            <person name="Valle F."/>
            <person name="Bolivar F."/>
        </authorList>
    </citation>
    <scope>NUCLEOTIDE SEQUENCE [GENOMIC DNA]</scope>
    <scope>PARTIAL PROTEIN SEQUENCE</scope>
    <source>
        <strain>K12</strain>
    </source>
</reference>
<reference key="2">
    <citation type="journal article" date="1997" name="Science">
        <title>The complete genome sequence of Escherichia coli K-12.</title>
        <authorList>
            <person name="Blattner F.R."/>
            <person name="Plunkett G. III"/>
            <person name="Bloch C.A."/>
            <person name="Perna N.T."/>
            <person name="Burland V."/>
            <person name="Riley M."/>
            <person name="Collado-Vides J."/>
            <person name="Glasner J.D."/>
            <person name="Rode C.K."/>
            <person name="Mayhew G.F."/>
            <person name="Gregor J."/>
            <person name="Davis N.W."/>
            <person name="Kirkpatrick H.A."/>
            <person name="Goeden M.A."/>
            <person name="Rose D.J."/>
            <person name="Mau B."/>
            <person name="Shao Y."/>
        </authorList>
    </citation>
    <scope>NUCLEOTIDE SEQUENCE [LARGE SCALE GENOMIC DNA]</scope>
    <source>
        <strain>K12 / MG1655 / ATCC 47076</strain>
    </source>
</reference>
<reference key="3">
    <citation type="journal article" date="2006" name="Mol. Syst. Biol.">
        <title>Highly accurate genome sequences of Escherichia coli K-12 strains MG1655 and W3110.</title>
        <authorList>
            <person name="Hayashi K."/>
            <person name="Morooka N."/>
            <person name="Yamamoto Y."/>
            <person name="Fujita K."/>
            <person name="Isono K."/>
            <person name="Choi S."/>
            <person name="Ohtsubo E."/>
            <person name="Baba T."/>
            <person name="Wanner B.L."/>
            <person name="Mori H."/>
            <person name="Horiuchi T."/>
        </authorList>
    </citation>
    <scope>NUCLEOTIDE SEQUENCE [LARGE SCALE GENOMIC DNA]</scope>
    <source>
        <strain>K12 / W3110 / ATCC 27325 / DSM 5911</strain>
    </source>
</reference>
<reference key="4">
    <citation type="journal article" date="1997" name="Electrophoresis">
        <title>Comparing the predicted and observed properties of proteins encoded in the genome of Escherichia coli K-12.</title>
        <authorList>
            <person name="Link A.J."/>
            <person name="Robison K."/>
            <person name="Church G.M."/>
        </authorList>
    </citation>
    <scope>PROTEIN SEQUENCE OF 2-13</scope>
    <source>
        <strain>K12 / EMG2</strain>
    </source>
</reference>
<reference key="5">
    <citation type="journal article" date="1998" name="J. Mol. Biol.">
        <title>Protein identification with N and C-terminal sequence tags in proteome projects.</title>
        <authorList>
            <person name="Wilkins M.R."/>
            <person name="Gasteiger E."/>
            <person name="Tonella L."/>
            <person name="Ou K."/>
            <person name="Tyler M."/>
            <person name="Sanchez J.-C."/>
            <person name="Gooley A.A."/>
            <person name="Walsh B.J."/>
            <person name="Bairoch A."/>
            <person name="Appel R.D."/>
            <person name="Williams K.L."/>
            <person name="Hochstrasser D.F."/>
        </authorList>
    </citation>
    <scope>PROTEIN SEQUENCE OF 2-5</scope>
    <source>
        <strain>K12 / W3110 / ATCC 27325 / DSM 5911</strain>
    </source>
</reference>
<reference key="6">
    <citation type="journal article" date="1972" name="J. Biol. Chem.">
        <title>Glutamate synthase from Escherichia coli. An iron-sulfide flavoprotein.</title>
        <authorList>
            <person name="Miller R.E."/>
            <person name="Stadtman E.R."/>
        </authorList>
    </citation>
    <scope>FUNCTION</scope>
    <scope>CATALYTIC ACTIVITY</scope>
    <scope>BIOPHYSICOCHEMICAL PROPERTIES</scope>
    <scope>SUBUNIT</scope>
    <source>
        <strain>W</strain>
    </source>
</reference>
<reference key="7">
    <citation type="journal article" date="1989" name="Protein Seq. Data Anal.">
        <title>Amino acid sequence analysis of the glutamate synthase enzyme from Escherichia coli K-12.</title>
        <authorList>
            <person name="Gosset G."/>
            <person name="Merino E."/>
            <person name="Recillas F."/>
            <person name="Oliver G."/>
            <person name="Becerril B."/>
            <person name="Bolivar F."/>
        </authorList>
    </citation>
    <scope>DISCUSSION OF SEQUENCE</scope>
</reference>
<reference key="8">
    <citation type="journal article" date="1997" name="Electrophoresis">
        <title>Escherichia coli proteome analysis using the gene-protein database.</title>
        <authorList>
            <person name="VanBogelen R.A."/>
            <person name="Abshire K.Z."/>
            <person name="Moldover B."/>
            <person name="Olson E.R."/>
            <person name="Neidhardt F.C."/>
        </authorList>
    </citation>
    <scope>IDENTIFICATION BY 2D-GEL</scope>
</reference>
<gene>
    <name type="primary">gltD</name>
    <name type="synonym">aspB</name>
    <name type="ordered locus">b3213</name>
    <name type="ordered locus">JW3180</name>
</gene>
<protein>
    <recommendedName>
        <fullName>Glutamate synthase [NADPH] small chain</fullName>
        <ecNumber evidence="2">1.4.1.13</ecNumber>
    </recommendedName>
    <alternativeName>
        <fullName>Glutamate synthase subunit beta</fullName>
        <shortName>GLTS beta chain</shortName>
    </alternativeName>
    <alternativeName>
        <fullName>NADPH-GOGAT</fullName>
    </alternativeName>
</protein>